<protein>
    <recommendedName>
        <fullName evidence="1">UPF0342 protein lhv_1666</fullName>
    </recommendedName>
</protein>
<comment type="similarity">
    <text evidence="1">Belongs to the UPF0342 family.</text>
</comment>
<reference key="1">
    <citation type="journal article" date="2008" name="J. Bacteriol.">
        <title>Genome sequence of Lactobacillus helveticus: an organism distinguished by selective gene loss and IS element expansion.</title>
        <authorList>
            <person name="Callanan M."/>
            <person name="Kaleta P."/>
            <person name="O'Callaghan J."/>
            <person name="O'Sullivan O."/>
            <person name="Jordan K."/>
            <person name="McAuliffe O."/>
            <person name="Sangrador-Vegas A."/>
            <person name="Slattery L."/>
            <person name="Fitzgerald G.F."/>
            <person name="Beresford T."/>
            <person name="Ross R.P."/>
        </authorList>
    </citation>
    <scope>NUCLEOTIDE SEQUENCE [LARGE SCALE GENOMIC DNA]</scope>
    <source>
        <strain>DPC 4571</strain>
    </source>
</reference>
<evidence type="ECO:0000255" key="1">
    <source>
        <dbReference type="HAMAP-Rule" id="MF_01526"/>
    </source>
</evidence>
<sequence length="116" mass="12997">MINIYDSANQLAQDLTKTDQYKAVGDAVKAVQADDESAALFKKMDEIQAKIMQAQQTGKPLSDEDQKAYQELNAQVQKNDKIVALLKSEQGLYDLLGEIQKAYTKPINDLYEGLRN</sequence>
<name>Y1666_LACH4</name>
<dbReference type="EMBL" id="CP000517">
    <property type="protein sequence ID" value="ABX27568.1"/>
    <property type="molecule type" value="Genomic_DNA"/>
</dbReference>
<dbReference type="RefSeq" id="WP_003627204.1">
    <property type="nucleotide sequence ID" value="NC_010080.1"/>
</dbReference>
<dbReference type="SMR" id="A8YWQ7"/>
<dbReference type="KEGG" id="lhe:lhv_1666"/>
<dbReference type="eggNOG" id="COG3679">
    <property type="taxonomic scope" value="Bacteria"/>
</dbReference>
<dbReference type="HOGENOM" id="CLU_140243_3_1_9"/>
<dbReference type="Proteomes" id="UP000000790">
    <property type="component" value="Chromosome"/>
</dbReference>
<dbReference type="Gene3D" id="1.20.1500.10">
    <property type="entry name" value="YheA/YmcA-like"/>
    <property type="match status" value="1"/>
</dbReference>
<dbReference type="HAMAP" id="MF_01526">
    <property type="entry name" value="UPF0342"/>
    <property type="match status" value="1"/>
</dbReference>
<dbReference type="InterPro" id="IPR010368">
    <property type="entry name" value="Com_YlbF"/>
</dbReference>
<dbReference type="InterPro" id="IPR023378">
    <property type="entry name" value="YheA/YmcA-like_dom_sf"/>
</dbReference>
<dbReference type="Pfam" id="PF06133">
    <property type="entry name" value="Com_YlbF"/>
    <property type="match status" value="1"/>
</dbReference>
<dbReference type="SUPFAM" id="SSF158622">
    <property type="entry name" value="YheA/YmcA-like"/>
    <property type="match status" value="1"/>
</dbReference>
<gene>
    <name type="ordered locus">lhv_1666</name>
</gene>
<accession>A8YWQ7</accession>
<feature type="chain" id="PRO_1000073544" description="UPF0342 protein lhv_1666">
    <location>
        <begin position="1"/>
        <end position="116"/>
    </location>
</feature>
<proteinExistence type="inferred from homology"/>
<organism>
    <name type="scientific">Lactobacillus helveticus (strain DPC 4571)</name>
    <dbReference type="NCBI Taxonomy" id="405566"/>
    <lineage>
        <taxon>Bacteria</taxon>
        <taxon>Bacillati</taxon>
        <taxon>Bacillota</taxon>
        <taxon>Bacilli</taxon>
        <taxon>Lactobacillales</taxon>
        <taxon>Lactobacillaceae</taxon>
        <taxon>Lactobacillus</taxon>
    </lineage>
</organism>